<comment type="function">
    <text evidence="1">Plays an important role in the de novo pathway of purine nucleotide biosynthesis. Catalyzes the first committed step in the biosynthesis of AMP from IMP.</text>
</comment>
<comment type="catalytic activity">
    <reaction evidence="1">
        <text>IMP + L-aspartate + GTP = N(6)-(1,2-dicarboxyethyl)-AMP + GDP + phosphate + 2 H(+)</text>
        <dbReference type="Rhea" id="RHEA:15753"/>
        <dbReference type="ChEBI" id="CHEBI:15378"/>
        <dbReference type="ChEBI" id="CHEBI:29991"/>
        <dbReference type="ChEBI" id="CHEBI:37565"/>
        <dbReference type="ChEBI" id="CHEBI:43474"/>
        <dbReference type="ChEBI" id="CHEBI:57567"/>
        <dbReference type="ChEBI" id="CHEBI:58053"/>
        <dbReference type="ChEBI" id="CHEBI:58189"/>
        <dbReference type="EC" id="6.3.4.4"/>
    </reaction>
</comment>
<comment type="cofactor">
    <cofactor evidence="1">
        <name>Mg(2+)</name>
        <dbReference type="ChEBI" id="CHEBI:18420"/>
    </cofactor>
    <text evidence="1">Binds 1 Mg(2+) ion per subunit.</text>
</comment>
<comment type="pathway">
    <text evidence="1">Purine metabolism; AMP biosynthesis via de novo pathway; AMP from IMP: step 1/2.</text>
</comment>
<comment type="subunit">
    <text evidence="1">Homodimer.</text>
</comment>
<comment type="subcellular location">
    <subcellularLocation>
        <location evidence="1">Cytoplasm</location>
    </subcellularLocation>
</comment>
<comment type="similarity">
    <text evidence="1">Belongs to the adenylosuccinate synthetase family.</text>
</comment>
<gene>
    <name evidence="1" type="primary">purA</name>
    <name type="ordered locus">Mbar_A0403</name>
</gene>
<accession>Q46FF6</accession>
<reference key="1">
    <citation type="journal article" date="2006" name="J. Bacteriol.">
        <title>The Methanosarcina barkeri genome: comparative analysis with Methanosarcina acetivorans and Methanosarcina mazei reveals extensive rearrangement within methanosarcinal genomes.</title>
        <authorList>
            <person name="Maeder D.L."/>
            <person name="Anderson I."/>
            <person name="Brettin T.S."/>
            <person name="Bruce D.C."/>
            <person name="Gilna P."/>
            <person name="Han C.S."/>
            <person name="Lapidus A."/>
            <person name="Metcalf W.W."/>
            <person name="Saunders E."/>
            <person name="Tapia R."/>
            <person name="Sowers K.R."/>
        </authorList>
    </citation>
    <scope>NUCLEOTIDE SEQUENCE [LARGE SCALE GENOMIC DNA]</scope>
    <source>
        <strain>Fusaro / DSM 804</strain>
    </source>
</reference>
<keyword id="KW-0963">Cytoplasm</keyword>
<keyword id="KW-0342">GTP-binding</keyword>
<keyword id="KW-0436">Ligase</keyword>
<keyword id="KW-0460">Magnesium</keyword>
<keyword id="KW-0479">Metal-binding</keyword>
<keyword id="KW-0547">Nucleotide-binding</keyword>
<keyword id="KW-0658">Purine biosynthesis</keyword>
<protein>
    <recommendedName>
        <fullName evidence="1">Adenylosuccinate synthetase</fullName>
        <shortName evidence="1">AMPSase</shortName>
        <shortName evidence="1">AdSS</shortName>
        <ecNumber evidence="1">6.3.4.4</ecNumber>
    </recommendedName>
    <alternativeName>
        <fullName evidence="1">IMP--aspartate ligase</fullName>
    </alternativeName>
</protein>
<evidence type="ECO:0000255" key="1">
    <source>
        <dbReference type="HAMAP-Rule" id="MF_00011"/>
    </source>
</evidence>
<sequence length="424" mass="46676">MFTIITGAQFGDEGKGKIVDLLAKDYDIVARFQGGNNAGHTVRVGNEVYKLHLIPSGILLNARVLIGPGVVLNPEVLAKEIAMFEKHGIQVNAEKLGVDAKTSIIMPYHIEMDGLREESREKKIGTTKRGIGYAYIDKVARDEFRMAELVDQERFLARLEELAPQKEKEIATLGGDPKIVRDPALIERYLELGKQFATYITDVSREINKALDEGKHVMAEAAQGTHLDVIHGTQKFVTSSSTIAGSACANLGVGPTRVNNVIAIVKAYITRVGEGPLPTELTGELGERLQKAGGEFGTTTGRGRRCGWFDLPLLKKAIALNGYTEISLTKLDVLTGLNPIRICTGYTFKGENLDYPPELTADLAECMPVYEDLPGWETDLTEVKAFEELPENARNYVKRLEELMEVPINYISVGPGRAQTFKKE</sequence>
<organism>
    <name type="scientific">Methanosarcina barkeri (strain Fusaro / DSM 804)</name>
    <dbReference type="NCBI Taxonomy" id="269797"/>
    <lineage>
        <taxon>Archaea</taxon>
        <taxon>Methanobacteriati</taxon>
        <taxon>Methanobacteriota</taxon>
        <taxon>Stenosarchaea group</taxon>
        <taxon>Methanomicrobia</taxon>
        <taxon>Methanosarcinales</taxon>
        <taxon>Methanosarcinaceae</taxon>
        <taxon>Methanosarcina</taxon>
    </lineage>
</organism>
<dbReference type="EC" id="6.3.4.4" evidence="1"/>
<dbReference type="EMBL" id="CP000099">
    <property type="protein sequence ID" value="AAZ69386.1"/>
    <property type="molecule type" value="Genomic_DNA"/>
</dbReference>
<dbReference type="SMR" id="Q46FF6"/>
<dbReference type="STRING" id="269797.Mbar_A0403"/>
<dbReference type="PaxDb" id="269797-Mbar_A0403"/>
<dbReference type="KEGG" id="mba:Mbar_A0403"/>
<dbReference type="eggNOG" id="arCOG04387">
    <property type="taxonomic scope" value="Archaea"/>
</dbReference>
<dbReference type="HOGENOM" id="CLU_029848_0_0_2"/>
<dbReference type="OrthoDB" id="372247at2157"/>
<dbReference type="UniPathway" id="UPA00075">
    <property type="reaction ID" value="UER00335"/>
</dbReference>
<dbReference type="GO" id="GO:0005737">
    <property type="term" value="C:cytoplasm"/>
    <property type="evidence" value="ECO:0007669"/>
    <property type="project" value="UniProtKB-SubCell"/>
</dbReference>
<dbReference type="GO" id="GO:0004019">
    <property type="term" value="F:adenylosuccinate synthase activity"/>
    <property type="evidence" value="ECO:0007669"/>
    <property type="project" value="UniProtKB-UniRule"/>
</dbReference>
<dbReference type="GO" id="GO:0005525">
    <property type="term" value="F:GTP binding"/>
    <property type="evidence" value="ECO:0007669"/>
    <property type="project" value="UniProtKB-UniRule"/>
</dbReference>
<dbReference type="GO" id="GO:0000287">
    <property type="term" value="F:magnesium ion binding"/>
    <property type="evidence" value="ECO:0007669"/>
    <property type="project" value="UniProtKB-UniRule"/>
</dbReference>
<dbReference type="GO" id="GO:0044208">
    <property type="term" value="P:'de novo' AMP biosynthetic process"/>
    <property type="evidence" value="ECO:0007669"/>
    <property type="project" value="UniProtKB-UniRule"/>
</dbReference>
<dbReference type="GO" id="GO:0046040">
    <property type="term" value="P:IMP metabolic process"/>
    <property type="evidence" value="ECO:0007669"/>
    <property type="project" value="TreeGrafter"/>
</dbReference>
<dbReference type="CDD" id="cd03108">
    <property type="entry name" value="AdSS"/>
    <property type="match status" value="1"/>
</dbReference>
<dbReference type="FunFam" id="1.10.300.10:FF:000001">
    <property type="entry name" value="Adenylosuccinate synthetase"/>
    <property type="match status" value="1"/>
</dbReference>
<dbReference type="FunFam" id="3.90.170.10:FF:000001">
    <property type="entry name" value="Adenylosuccinate synthetase"/>
    <property type="match status" value="1"/>
</dbReference>
<dbReference type="Gene3D" id="3.40.440.10">
    <property type="entry name" value="Adenylosuccinate Synthetase, subunit A, domain 1"/>
    <property type="match status" value="1"/>
</dbReference>
<dbReference type="Gene3D" id="1.10.300.10">
    <property type="entry name" value="Adenylosuccinate Synthetase, subunit A, domain 2"/>
    <property type="match status" value="1"/>
</dbReference>
<dbReference type="Gene3D" id="3.90.170.10">
    <property type="entry name" value="Adenylosuccinate Synthetase, subunit A, domain 3"/>
    <property type="match status" value="1"/>
</dbReference>
<dbReference type="HAMAP" id="MF_00011">
    <property type="entry name" value="Adenylosucc_synth"/>
    <property type="match status" value="1"/>
</dbReference>
<dbReference type="InterPro" id="IPR018220">
    <property type="entry name" value="Adenylosuccin_syn_GTP-bd"/>
</dbReference>
<dbReference type="InterPro" id="IPR042109">
    <property type="entry name" value="Adenylosuccinate_synth_dom1"/>
</dbReference>
<dbReference type="InterPro" id="IPR042110">
    <property type="entry name" value="Adenylosuccinate_synth_dom2"/>
</dbReference>
<dbReference type="InterPro" id="IPR042111">
    <property type="entry name" value="Adenylosuccinate_synth_dom3"/>
</dbReference>
<dbReference type="InterPro" id="IPR001114">
    <property type="entry name" value="Adenylosuccinate_synthetase"/>
</dbReference>
<dbReference type="InterPro" id="IPR027417">
    <property type="entry name" value="P-loop_NTPase"/>
</dbReference>
<dbReference type="NCBIfam" id="NF002223">
    <property type="entry name" value="PRK01117.1"/>
    <property type="match status" value="1"/>
</dbReference>
<dbReference type="NCBIfam" id="TIGR00184">
    <property type="entry name" value="purA"/>
    <property type="match status" value="1"/>
</dbReference>
<dbReference type="PANTHER" id="PTHR11846">
    <property type="entry name" value="ADENYLOSUCCINATE SYNTHETASE"/>
    <property type="match status" value="1"/>
</dbReference>
<dbReference type="PANTHER" id="PTHR11846:SF0">
    <property type="entry name" value="ADENYLOSUCCINATE SYNTHETASE"/>
    <property type="match status" value="1"/>
</dbReference>
<dbReference type="Pfam" id="PF00709">
    <property type="entry name" value="Adenylsucc_synt"/>
    <property type="match status" value="1"/>
</dbReference>
<dbReference type="SMART" id="SM00788">
    <property type="entry name" value="Adenylsucc_synt"/>
    <property type="match status" value="1"/>
</dbReference>
<dbReference type="SUPFAM" id="SSF52540">
    <property type="entry name" value="P-loop containing nucleoside triphosphate hydrolases"/>
    <property type="match status" value="1"/>
</dbReference>
<dbReference type="PROSITE" id="PS01266">
    <property type="entry name" value="ADENYLOSUCCIN_SYN_1"/>
    <property type="match status" value="1"/>
</dbReference>
<feature type="chain" id="PRO_0000224340" description="Adenylosuccinate synthetase">
    <location>
        <begin position="1"/>
        <end position="424"/>
    </location>
</feature>
<feature type="active site" description="Proton acceptor" evidence="1">
    <location>
        <position position="12"/>
    </location>
</feature>
<feature type="active site" description="Proton donor" evidence="1">
    <location>
        <position position="40"/>
    </location>
</feature>
<feature type="binding site" evidence="1">
    <location>
        <begin position="11"/>
        <end position="17"/>
    </location>
    <ligand>
        <name>GTP</name>
        <dbReference type="ChEBI" id="CHEBI:37565"/>
    </ligand>
</feature>
<feature type="binding site" description="in other chain" evidence="1">
    <location>
        <begin position="12"/>
        <end position="15"/>
    </location>
    <ligand>
        <name>IMP</name>
        <dbReference type="ChEBI" id="CHEBI:58053"/>
        <note>ligand shared between dimeric partners</note>
    </ligand>
</feature>
<feature type="binding site" evidence="1">
    <location>
        <position position="12"/>
    </location>
    <ligand>
        <name>Mg(2+)</name>
        <dbReference type="ChEBI" id="CHEBI:18420"/>
    </ligand>
</feature>
<feature type="binding site" description="in other chain" evidence="1">
    <location>
        <begin position="37"/>
        <end position="40"/>
    </location>
    <ligand>
        <name>IMP</name>
        <dbReference type="ChEBI" id="CHEBI:58053"/>
        <note>ligand shared between dimeric partners</note>
    </ligand>
</feature>
<feature type="binding site" evidence="1">
    <location>
        <begin position="39"/>
        <end position="41"/>
    </location>
    <ligand>
        <name>GTP</name>
        <dbReference type="ChEBI" id="CHEBI:37565"/>
    </ligand>
</feature>
<feature type="binding site" evidence="1">
    <location>
        <position position="39"/>
    </location>
    <ligand>
        <name>Mg(2+)</name>
        <dbReference type="ChEBI" id="CHEBI:18420"/>
    </ligand>
</feature>
<feature type="binding site" description="in other chain" evidence="1">
    <location>
        <position position="127"/>
    </location>
    <ligand>
        <name>IMP</name>
        <dbReference type="ChEBI" id="CHEBI:58053"/>
        <note>ligand shared between dimeric partners</note>
    </ligand>
</feature>
<feature type="binding site" evidence="1">
    <location>
        <position position="141"/>
    </location>
    <ligand>
        <name>IMP</name>
        <dbReference type="ChEBI" id="CHEBI:58053"/>
        <note>ligand shared between dimeric partners</note>
    </ligand>
</feature>
<feature type="binding site" description="in other chain" evidence="1">
    <location>
        <position position="223"/>
    </location>
    <ligand>
        <name>IMP</name>
        <dbReference type="ChEBI" id="CHEBI:58053"/>
        <note>ligand shared between dimeric partners</note>
    </ligand>
</feature>
<feature type="binding site" description="in other chain" evidence="1">
    <location>
        <position position="238"/>
    </location>
    <ligand>
        <name>IMP</name>
        <dbReference type="ChEBI" id="CHEBI:58053"/>
        <note>ligand shared between dimeric partners</note>
    </ligand>
</feature>
<feature type="binding site" evidence="1">
    <location>
        <begin position="298"/>
        <end position="304"/>
    </location>
    <ligand>
        <name>substrate</name>
    </ligand>
</feature>
<feature type="binding site" description="in other chain" evidence="1">
    <location>
        <position position="302"/>
    </location>
    <ligand>
        <name>IMP</name>
        <dbReference type="ChEBI" id="CHEBI:58053"/>
        <note>ligand shared between dimeric partners</note>
    </ligand>
</feature>
<feature type="binding site" evidence="1">
    <location>
        <position position="304"/>
    </location>
    <ligand>
        <name>GTP</name>
        <dbReference type="ChEBI" id="CHEBI:37565"/>
    </ligand>
</feature>
<feature type="binding site" evidence="1">
    <location>
        <begin position="330"/>
        <end position="332"/>
    </location>
    <ligand>
        <name>GTP</name>
        <dbReference type="ChEBI" id="CHEBI:37565"/>
    </ligand>
</feature>
<feature type="binding site" evidence="1">
    <location>
        <begin position="412"/>
        <end position="414"/>
    </location>
    <ligand>
        <name>GTP</name>
        <dbReference type="ChEBI" id="CHEBI:37565"/>
    </ligand>
</feature>
<name>PURA_METBF</name>
<proteinExistence type="inferred from homology"/>